<proteinExistence type="evidence at protein level"/>
<accession>P09944</accession>
<name>HIRPA_HIRME</name>
<protein>
    <recommendedName>
        <fullName>Hirudin-PA</fullName>
    </recommendedName>
</protein>
<sequence>ITYTDCTESGQNLCLCEGSNVCGKGNKCILGSQGKDNQCVTGEGTPKPQSHNQGDFEPIPEDAYDE</sequence>
<keyword id="KW-0002">3D-structure</keyword>
<keyword id="KW-0903">Direct protein sequencing</keyword>
<keyword id="KW-1015">Disulfide bond</keyword>
<keyword id="KW-0325">Glycoprotein</keyword>
<keyword id="KW-0646">Protease inhibitor</keyword>
<keyword id="KW-0964">Secreted</keyword>
<keyword id="KW-0722">Serine protease inhibitor</keyword>
<keyword id="KW-0765">Sulfation</keyword>
<feature type="chain" id="PRO_0000195640" description="Hirudin-PA">
    <location>
        <begin position="1"/>
        <end position="66"/>
    </location>
</feature>
<feature type="region of interest" description="Interaction with thrombin active site" evidence="1">
    <location>
        <begin position="1"/>
        <end position="3"/>
    </location>
</feature>
<feature type="region of interest" description="Disordered" evidence="2">
    <location>
        <begin position="39"/>
        <end position="66"/>
    </location>
</feature>
<feature type="region of interest" description="Interaction with fibrinogen-binding exosite of thrombin" evidence="1">
    <location>
        <begin position="55"/>
        <end position="66"/>
    </location>
</feature>
<feature type="modified residue" description="Sulfotyrosine" evidence="3">
    <location>
        <position position="64"/>
    </location>
</feature>
<feature type="glycosylation site" description="O-linked (GalNAc...) threonine" evidence="1">
    <location>
        <position position="45"/>
    </location>
</feature>
<feature type="disulfide bond" evidence="1">
    <location>
        <begin position="6"/>
        <end position="14"/>
    </location>
</feature>
<feature type="disulfide bond" evidence="1">
    <location>
        <begin position="16"/>
        <end position="28"/>
    </location>
</feature>
<feature type="disulfide bond" evidence="1">
    <location>
        <begin position="22"/>
        <end position="39"/>
    </location>
</feature>
<evidence type="ECO:0000250" key="1"/>
<evidence type="ECO:0000256" key="2">
    <source>
        <dbReference type="SAM" id="MobiDB-lite"/>
    </source>
</evidence>
<evidence type="ECO:0000269" key="3">
    <source>
    </source>
</evidence>
<evidence type="ECO:0000305" key="4"/>
<comment type="function">
    <text>Hirudin is a potent thrombin-specific protease inhibitor. It forms a stable non-covalent complex with alpha-thrombin, thereby abolishing its ability to cleave fibrinogen.</text>
</comment>
<comment type="subcellular location">
    <subcellularLocation>
        <location>Secreted</location>
    </subcellularLocation>
</comment>
<comment type="similarity">
    <text evidence="4">Belongs to the protease inhibitor I14 (hirudin) family.</text>
</comment>
<reference key="1">
    <citation type="journal article" date="1986" name="Biol. Chem. Hoppe-Seyler">
        <title>Isolation and characterization of hirudin isoinhibitors and sequence analysis of hirudin PA.</title>
        <authorList>
            <person name="Dodt J."/>
            <person name="Machleidt W."/>
            <person name="Seemueller U."/>
            <person name="Maschler R."/>
            <person name="Fritz H."/>
        </authorList>
    </citation>
    <scope>PROTEIN SEQUENCE</scope>
    <scope>SULFATION AT TYR-64</scope>
</reference>
<dbReference type="PIR" id="A24350">
    <property type="entry name" value="A24350"/>
</dbReference>
<dbReference type="PDB" id="1IHT">
    <property type="method" value="X-ray"/>
    <property type="resolution" value="2.10 A"/>
    <property type="chains" value="I=55-60"/>
</dbReference>
<dbReference type="PDBsum" id="1IHT"/>
<dbReference type="SMR" id="P09944"/>
<dbReference type="Allergome" id="9843">
    <property type="allergen name" value="Hir me Hirudin"/>
</dbReference>
<dbReference type="MEROPS" id="I14.001"/>
<dbReference type="EvolutionaryTrace" id="P09944"/>
<dbReference type="GO" id="GO:0005576">
    <property type="term" value="C:extracellular region"/>
    <property type="evidence" value="ECO:0007669"/>
    <property type="project" value="UniProtKB-SubCell"/>
</dbReference>
<dbReference type="GO" id="GO:0004867">
    <property type="term" value="F:serine-type endopeptidase inhibitor activity"/>
    <property type="evidence" value="ECO:0007669"/>
    <property type="project" value="UniProtKB-KW"/>
</dbReference>
<dbReference type="Gene3D" id="2.70.10.10">
    <property type="entry name" value="Thrombin Inhibitor (Hirudin), subunit I"/>
    <property type="match status" value="1"/>
</dbReference>
<dbReference type="InterPro" id="IPR024793">
    <property type="entry name" value="Hirudin"/>
</dbReference>
<dbReference type="InterPro" id="IPR011061">
    <property type="entry name" value="Hirudin/antistatin"/>
</dbReference>
<dbReference type="InterPro" id="IPR000429">
    <property type="entry name" value="Prot_inh_hirudin"/>
</dbReference>
<dbReference type="Pfam" id="PF00713">
    <property type="entry name" value="Hirudin"/>
    <property type="match status" value="1"/>
</dbReference>
<dbReference type="PIRSF" id="PIRSF001640">
    <property type="entry name" value="Hirudin"/>
    <property type="match status" value="1"/>
</dbReference>
<dbReference type="PRINTS" id="PR00777">
    <property type="entry name" value="HIRUDIN"/>
</dbReference>
<dbReference type="SUPFAM" id="SSF57262">
    <property type="entry name" value="Leech antihemostatic proteins"/>
    <property type="match status" value="1"/>
</dbReference>
<organism>
    <name type="scientific">Hirudo medicinalis</name>
    <name type="common">Medicinal leech</name>
    <dbReference type="NCBI Taxonomy" id="6421"/>
    <lineage>
        <taxon>Eukaryota</taxon>
        <taxon>Metazoa</taxon>
        <taxon>Spiralia</taxon>
        <taxon>Lophotrochozoa</taxon>
        <taxon>Annelida</taxon>
        <taxon>Clitellata</taxon>
        <taxon>Hirudinea</taxon>
        <taxon>Hirudinida</taxon>
        <taxon>Hirudiniformes</taxon>
        <taxon>Hirudinidae</taxon>
        <taxon>Hirudo</taxon>
    </lineage>
</organism>